<accession>Q5QS15</accession>
<name>CYB_PERGU</name>
<sequence length="381" mass="42873">MTNLRKTHPLMKIINDAFIDLPTPSNISAWWNFGSLLGVCLVIQILTGLFLAMHYTSDTLTAFSSVAHICRDVNYGWLIRNLHANGASIFFICLFLHVGRGIYYGSYLFKETWNIGVILLLTVMATAFVGYVLPWGQMSFWGATVITNLLSAIPYIGTTLVEWIWGGFSVDKATLTRFFAFHFILPFIVTAMVIVHLLFLHETGSNNPSGLNPDADKIPFHPYYTIKDALGLLLMILLLLLLAMFSPDMLGDPDNFSPANPLNTPPHIKPEWYFLFAYAILRSIPNKLGGVLALLMSILILLVIPFLHTSKQRSLMFRPISQTLFWLLTADLFTLTWIGGQPVEQPFIIIGQVASILYFLIIIALMPLAGLLENYMLKPKW</sequence>
<proteinExistence type="inferred from homology"/>
<evidence type="ECO:0000250" key="1"/>
<evidence type="ECO:0000250" key="2">
    <source>
        <dbReference type="UniProtKB" id="P00157"/>
    </source>
</evidence>
<evidence type="ECO:0000255" key="3">
    <source>
        <dbReference type="PROSITE-ProRule" id="PRU00967"/>
    </source>
</evidence>
<evidence type="ECO:0000255" key="4">
    <source>
        <dbReference type="PROSITE-ProRule" id="PRU00968"/>
    </source>
</evidence>
<evidence type="ECO:0000305" key="5"/>
<comment type="function">
    <text evidence="2">Component of the ubiquinol-cytochrome c reductase complex (complex III or cytochrome b-c1 complex) that is part of the mitochondrial respiratory chain. The b-c1 complex mediates electron transfer from ubiquinol to cytochrome c. Contributes to the generation of a proton gradient across the mitochondrial membrane that is then used for ATP synthesis.</text>
</comment>
<comment type="cofactor">
    <cofactor evidence="2">
        <name>heme b</name>
        <dbReference type="ChEBI" id="CHEBI:60344"/>
    </cofactor>
    <text evidence="2">Binds 2 heme b groups non-covalently.</text>
</comment>
<comment type="subunit">
    <text evidence="2">The cytochrome bc1 complex contains 11 subunits: 3 respiratory subunits (MT-CYB, CYC1 and UQCRFS1), 2 core proteins (UQCRC1 and UQCRC2) and 6 low-molecular weight proteins (UQCRH/QCR6, UQCRB/QCR7, UQCRQ/QCR8, UQCR10/QCR9, UQCR11/QCR10 and a cleavage product of UQCRFS1). This cytochrome bc1 complex then forms a dimer.</text>
</comment>
<comment type="subcellular location">
    <subcellularLocation>
        <location evidence="2">Mitochondrion inner membrane</location>
        <topology evidence="2">Multi-pass membrane protein</topology>
    </subcellularLocation>
</comment>
<comment type="miscellaneous">
    <text evidence="1">Heme 1 (or BL or b562) is low-potential and absorbs at about 562 nm, and heme 2 (or BH or b566) is high-potential and absorbs at about 566 nm.</text>
</comment>
<comment type="similarity">
    <text evidence="3 4">Belongs to the cytochrome b family.</text>
</comment>
<comment type="caution">
    <text evidence="2">The full-length protein contains only eight transmembrane helices, not nine as predicted by bioinformatics tools.</text>
</comment>
<comment type="sequence caution" evidence="5">
    <conflict type="frameshift">
        <sequence resource="EMBL-CDS" id="CAG26432"/>
    </conflict>
</comment>
<dbReference type="EMBL" id="AJ639872">
    <property type="protein sequence ID" value="CAG26432.1"/>
    <property type="status" value="ALT_FRAME"/>
    <property type="molecule type" value="Genomic_DNA"/>
</dbReference>
<dbReference type="RefSeq" id="YP_161246.1">
    <property type="nucleotide sequence ID" value="NC_006521.1"/>
</dbReference>
<dbReference type="SMR" id="Q5QS15"/>
<dbReference type="GO" id="GO:0005743">
    <property type="term" value="C:mitochondrial inner membrane"/>
    <property type="evidence" value="ECO:0007669"/>
    <property type="project" value="UniProtKB-SubCell"/>
</dbReference>
<dbReference type="GO" id="GO:0045275">
    <property type="term" value="C:respiratory chain complex III"/>
    <property type="evidence" value="ECO:0007669"/>
    <property type="project" value="InterPro"/>
</dbReference>
<dbReference type="GO" id="GO:0046872">
    <property type="term" value="F:metal ion binding"/>
    <property type="evidence" value="ECO:0007669"/>
    <property type="project" value="UniProtKB-KW"/>
</dbReference>
<dbReference type="GO" id="GO:0008121">
    <property type="term" value="F:ubiquinol-cytochrome-c reductase activity"/>
    <property type="evidence" value="ECO:0007669"/>
    <property type="project" value="InterPro"/>
</dbReference>
<dbReference type="GO" id="GO:0006122">
    <property type="term" value="P:mitochondrial electron transport, ubiquinol to cytochrome c"/>
    <property type="evidence" value="ECO:0007669"/>
    <property type="project" value="TreeGrafter"/>
</dbReference>
<dbReference type="CDD" id="cd00290">
    <property type="entry name" value="cytochrome_b_C"/>
    <property type="match status" value="1"/>
</dbReference>
<dbReference type="CDD" id="cd00284">
    <property type="entry name" value="Cytochrome_b_N"/>
    <property type="match status" value="1"/>
</dbReference>
<dbReference type="FunFam" id="1.20.810.10:FF:000002">
    <property type="entry name" value="Cytochrome b"/>
    <property type="match status" value="1"/>
</dbReference>
<dbReference type="Gene3D" id="1.20.810.10">
    <property type="entry name" value="Cytochrome Bc1 Complex, Chain C"/>
    <property type="match status" value="1"/>
</dbReference>
<dbReference type="InterPro" id="IPR005798">
    <property type="entry name" value="Cyt_b/b6_C"/>
</dbReference>
<dbReference type="InterPro" id="IPR036150">
    <property type="entry name" value="Cyt_b/b6_C_sf"/>
</dbReference>
<dbReference type="InterPro" id="IPR005797">
    <property type="entry name" value="Cyt_b/b6_N"/>
</dbReference>
<dbReference type="InterPro" id="IPR027387">
    <property type="entry name" value="Cytb/b6-like_sf"/>
</dbReference>
<dbReference type="InterPro" id="IPR030689">
    <property type="entry name" value="Cytochrome_b"/>
</dbReference>
<dbReference type="InterPro" id="IPR048260">
    <property type="entry name" value="Cytochrome_b_C_euk/bac"/>
</dbReference>
<dbReference type="InterPro" id="IPR048259">
    <property type="entry name" value="Cytochrome_b_N_euk/bac"/>
</dbReference>
<dbReference type="InterPro" id="IPR016174">
    <property type="entry name" value="Di-haem_cyt_TM"/>
</dbReference>
<dbReference type="PANTHER" id="PTHR19271">
    <property type="entry name" value="CYTOCHROME B"/>
    <property type="match status" value="1"/>
</dbReference>
<dbReference type="PANTHER" id="PTHR19271:SF16">
    <property type="entry name" value="CYTOCHROME B"/>
    <property type="match status" value="1"/>
</dbReference>
<dbReference type="Pfam" id="PF00032">
    <property type="entry name" value="Cytochrom_B_C"/>
    <property type="match status" value="1"/>
</dbReference>
<dbReference type="Pfam" id="PF00033">
    <property type="entry name" value="Cytochrome_B"/>
    <property type="match status" value="1"/>
</dbReference>
<dbReference type="PIRSF" id="PIRSF038885">
    <property type="entry name" value="COB"/>
    <property type="match status" value="1"/>
</dbReference>
<dbReference type="SUPFAM" id="SSF81648">
    <property type="entry name" value="a domain/subunit of cytochrome bc1 complex (Ubiquinol-cytochrome c reductase)"/>
    <property type="match status" value="1"/>
</dbReference>
<dbReference type="SUPFAM" id="SSF81342">
    <property type="entry name" value="Transmembrane di-heme cytochromes"/>
    <property type="match status" value="1"/>
</dbReference>
<dbReference type="PROSITE" id="PS51003">
    <property type="entry name" value="CYTB_CTER"/>
    <property type="match status" value="1"/>
</dbReference>
<dbReference type="PROSITE" id="PS51002">
    <property type="entry name" value="CYTB_NTER"/>
    <property type="match status" value="1"/>
</dbReference>
<geneLocation type="mitochondrion"/>
<keyword id="KW-0249">Electron transport</keyword>
<keyword id="KW-0349">Heme</keyword>
<keyword id="KW-0408">Iron</keyword>
<keyword id="KW-0472">Membrane</keyword>
<keyword id="KW-0479">Metal-binding</keyword>
<keyword id="KW-0496">Mitochondrion</keyword>
<keyword id="KW-0999">Mitochondrion inner membrane</keyword>
<keyword id="KW-0679">Respiratory chain</keyword>
<keyword id="KW-0812">Transmembrane</keyword>
<keyword id="KW-1133">Transmembrane helix</keyword>
<keyword id="KW-0813">Transport</keyword>
<keyword id="KW-0830">Ubiquinone</keyword>
<reference key="1">
    <citation type="journal article" date="2004" name="Gene">
        <title>Marsupial relationships and a timeline for marsupial radiation in South Gondwana.</title>
        <authorList>
            <person name="Nilsson M.A."/>
            <person name="Arnason U."/>
            <person name="Spencer P.B.S."/>
            <person name="Janke A."/>
        </authorList>
    </citation>
    <scope>NUCLEOTIDE SEQUENCE [GENOMIC DNA]</scope>
    <source>
        <tissue>Liver</tissue>
    </source>
</reference>
<organism>
    <name type="scientific">Perameles gunnii</name>
    <name type="common">Eastern barred bandicoot</name>
    <dbReference type="NCBI Taxonomy" id="37737"/>
    <lineage>
        <taxon>Eukaryota</taxon>
        <taxon>Metazoa</taxon>
        <taxon>Chordata</taxon>
        <taxon>Craniata</taxon>
        <taxon>Vertebrata</taxon>
        <taxon>Euteleostomi</taxon>
        <taxon>Mammalia</taxon>
        <taxon>Metatheria</taxon>
        <taxon>Peramelemorphia</taxon>
        <taxon>Peramelidae</taxon>
        <taxon>Perameles</taxon>
    </lineage>
</organism>
<gene>
    <name type="primary">MT-CYB</name>
    <name type="synonym">COB</name>
    <name type="synonym">CYTB</name>
    <name type="synonym">MTCYB</name>
</gene>
<feature type="chain" id="PRO_0000254842" description="Cytochrome b">
    <location>
        <begin position="1"/>
        <end position="381"/>
    </location>
</feature>
<feature type="transmembrane region" description="Helical" evidence="2">
    <location>
        <begin position="33"/>
        <end position="53"/>
    </location>
</feature>
<feature type="transmembrane region" description="Helical" evidence="2">
    <location>
        <begin position="77"/>
        <end position="98"/>
    </location>
</feature>
<feature type="transmembrane region" description="Helical" evidence="2">
    <location>
        <begin position="113"/>
        <end position="133"/>
    </location>
</feature>
<feature type="transmembrane region" description="Helical" evidence="2">
    <location>
        <begin position="178"/>
        <end position="198"/>
    </location>
</feature>
<feature type="transmembrane region" description="Helical" evidence="2">
    <location>
        <begin position="226"/>
        <end position="246"/>
    </location>
</feature>
<feature type="transmembrane region" description="Helical" evidence="2">
    <location>
        <begin position="288"/>
        <end position="308"/>
    </location>
</feature>
<feature type="transmembrane region" description="Helical" evidence="2">
    <location>
        <begin position="320"/>
        <end position="340"/>
    </location>
</feature>
<feature type="transmembrane region" description="Helical" evidence="2">
    <location>
        <begin position="347"/>
        <end position="367"/>
    </location>
</feature>
<feature type="binding site" description="axial binding residue" evidence="2">
    <location>
        <position position="83"/>
    </location>
    <ligand>
        <name>heme b</name>
        <dbReference type="ChEBI" id="CHEBI:60344"/>
        <label>b562</label>
    </ligand>
    <ligandPart>
        <name>Fe</name>
        <dbReference type="ChEBI" id="CHEBI:18248"/>
    </ligandPart>
</feature>
<feature type="binding site" description="axial binding residue" evidence="2">
    <location>
        <position position="97"/>
    </location>
    <ligand>
        <name>heme b</name>
        <dbReference type="ChEBI" id="CHEBI:60344"/>
        <label>b566</label>
    </ligand>
    <ligandPart>
        <name>Fe</name>
        <dbReference type="ChEBI" id="CHEBI:18248"/>
    </ligandPart>
</feature>
<feature type="binding site" description="axial binding residue" evidence="2">
    <location>
        <position position="182"/>
    </location>
    <ligand>
        <name>heme b</name>
        <dbReference type="ChEBI" id="CHEBI:60344"/>
        <label>b562</label>
    </ligand>
    <ligandPart>
        <name>Fe</name>
        <dbReference type="ChEBI" id="CHEBI:18248"/>
    </ligandPart>
</feature>
<feature type="binding site" description="axial binding residue" evidence="2">
    <location>
        <position position="196"/>
    </location>
    <ligand>
        <name>heme b</name>
        <dbReference type="ChEBI" id="CHEBI:60344"/>
        <label>b566</label>
    </ligand>
    <ligandPart>
        <name>Fe</name>
        <dbReference type="ChEBI" id="CHEBI:18248"/>
    </ligandPart>
</feature>
<feature type="binding site" evidence="2">
    <location>
        <position position="201"/>
    </location>
    <ligand>
        <name>a ubiquinone</name>
        <dbReference type="ChEBI" id="CHEBI:16389"/>
    </ligand>
</feature>
<protein>
    <recommendedName>
        <fullName>Cytochrome b</fullName>
    </recommendedName>
    <alternativeName>
        <fullName>Complex III subunit 3</fullName>
    </alternativeName>
    <alternativeName>
        <fullName>Complex III subunit III</fullName>
    </alternativeName>
    <alternativeName>
        <fullName>Cytochrome b-c1 complex subunit 3</fullName>
    </alternativeName>
    <alternativeName>
        <fullName>Ubiquinol-cytochrome-c reductase complex cytochrome b subunit</fullName>
    </alternativeName>
</protein>